<keyword id="KW-1185">Reference proteome</keyword>
<keyword id="KW-0678">Repressor</keyword>
<keyword id="KW-0687">Ribonucleoprotein</keyword>
<keyword id="KW-0689">Ribosomal protein</keyword>
<keyword id="KW-0694">RNA-binding</keyword>
<keyword id="KW-0699">rRNA-binding</keyword>
<keyword id="KW-0810">Translation regulation</keyword>
<keyword id="KW-0820">tRNA-binding</keyword>
<feature type="chain" id="PRO_0000307981" description="Large ribosomal subunit protein uL1">
    <location>
        <begin position="1"/>
        <end position="232"/>
    </location>
</feature>
<dbReference type="EMBL" id="CP000270">
    <property type="protein sequence ID" value="ABE32630.1"/>
    <property type="molecule type" value="Genomic_DNA"/>
</dbReference>
<dbReference type="RefSeq" id="WP_011490061.1">
    <property type="nucleotide sequence ID" value="NZ_CP008760.1"/>
</dbReference>
<dbReference type="SMR" id="Q13TF9"/>
<dbReference type="STRING" id="266265.Bxe_A0303"/>
<dbReference type="GeneID" id="97055903"/>
<dbReference type="KEGG" id="bxb:DR64_2473"/>
<dbReference type="KEGG" id="bxe:Bxe_A0303"/>
<dbReference type="eggNOG" id="COG0081">
    <property type="taxonomic scope" value="Bacteria"/>
</dbReference>
<dbReference type="OrthoDB" id="9803740at2"/>
<dbReference type="Proteomes" id="UP000001817">
    <property type="component" value="Chromosome 1"/>
</dbReference>
<dbReference type="GO" id="GO:0022625">
    <property type="term" value="C:cytosolic large ribosomal subunit"/>
    <property type="evidence" value="ECO:0007669"/>
    <property type="project" value="TreeGrafter"/>
</dbReference>
<dbReference type="GO" id="GO:0019843">
    <property type="term" value="F:rRNA binding"/>
    <property type="evidence" value="ECO:0007669"/>
    <property type="project" value="UniProtKB-UniRule"/>
</dbReference>
<dbReference type="GO" id="GO:0003735">
    <property type="term" value="F:structural constituent of ribosome"/>
    <property type="evidence" value="ECO:0007669"/>
    <property type="project" value="InterPro"/>
</dbReference>
<dbReference type="GO" id="GO:0000049">
    <property type="term" value="F:tRNA binding"/>
    <property type="evidence" value="ECO:0007669"/>
    <property type="project" value="UniProtKB-KW"/>
</dbReference>
<dbReference type="GO" id="GO:0006417">
    <property type="term" value="P:regulation of translation"/>
    <property type="evidence" value="ECO:0007669"/>
    <property type="project" value="UniProtKB-KW"/>
</dbReference>
<dbReference type="GO" id="GO:0006412">
    <property type="term" value="P:translation"/>
    <property type="evidence" value="ECO:0007669"/>
    <property type="project" value="UniProtKB-UniRule"/>
</dbReference>
<dbReference type="CDD" id="cd00403">
    <property type="entry name" value="Ribosomal_L1"/>
    <property type="match status" value="1"/>
</dbReference>
<dbReference type="FunFam" id="3.40.50.790:FF:000001">
    <property type="entry name" value="50S ribosomal protein L1"/>
    <property type="match status" value="1"/>
</dbReference>
<dbReference type="Gene3D" id="3.30.190.20">
    <property type="match status" value="1"/>
</dbReference>
<dbReference type="Gene3D" id="3.40.50.790">
    <property type="match status" value="1"/>
</dbReference>
<dbReference type="HAMAP" id="MF_01318_B">
    <property type="entry name" value="Ribosomal_uL1_B"/>
    <property type="match status" value="1"/>
</dbReference>
<dbReference type="InterPro" id="IPR005878">
    <property type="entry name" value="Ribosom_uL1_bac-type"/>
</dbReference>
<dbReference type="InterPro" id="IPR002143">
    <property type="entry name" value="Ribosomal_uL1"/>
</dbReference>
<dbReference type="InterPro" id="IPR023674">
    <property type="entry name" value="Ribosomal_uL1-like"/>
</dbReference>
<dbReference type="InterPro" id="IPR028364">
    <property type="entry name" value="Ribosomal_uL1/biogenesis"/>
</dbReference>
<dbReference type="InterPro" id="IPR016095">
    <property type="entry name" value="Ribosomal_uL1_3-a/b-sand"/>
</dbReference>
<dbReference type="InterPro" id="IPR023673">
    <property type="entry name" value="Ribosomal_uL1_CS"/>
</dbReference>
<dbReference type="NCBIfam" id="TIGR01169">
    <property type="entry name" value="rplA_bact"/>
    <property type="match status" value="1"/>
</dbReference>
<dbReference type="PANTHER" id="PTHR36427">
    <property type="entry name" value="54S RIBOSOMAL PROTEIN L1, MITOCHONDRIAL"/>
    <property type="match status" value="1"/>
</dbReference>
<dbReference type="PANTHER" id="PTHR36427:SF3">
    <property type="entry name" value="LARGE RIBOSOMAL SUBUNIT PROTEIN UL1M"/>
    <property type="match status" value="1"/>
</dbReference>
<dbReference type="Pfam" id="PF00687">
    <property type="entry name" value="Ribosomal_L1"/>
    <property type="match status" value="1"/>
</dbReference>
<dbReference type="PIRSF" id="PIRSF002155">
    <property type="entry name" value="Ribosomal_L1"/>
    <property type="match status" value="1"/>
</dbReference>
<dbReference type="SUPFAM" id="SSF56808">
    <property type="entry name" value="Ribosomal protein L1"/>
    <property type="match status" value="1"/>
</dbReference>
<dbReference type="PROSITE" id="PS01199">
    <property type="entry name" value="RIBOSOMAL_L1"/>
    <property type="match status" value="1"/>
</dbReference>
<reference key="1">
    <citation type="journal article" date="2006" name="Proc. Natl. Acad. Sci. U.S.A.">
        <title>Burkholderia xenovorans LB400 harbors a multi-replicon, 9.73-Mbp genome shaped for versatility.</title>
        <authorList>
            <person name="Chain P.S.G."/>
            <person name="Denef V.J."/>
            <person name="Konstantinidis K.T."/>
            <person name="Vergez L.M."/>
            <person name="Agullo L."/>
            <person name="Reyes V.L."/>
            <person name="Hauser L."/>
            <person name="Cordova M."/>
            <person name="Gomez L."/>
            <person name="Gonzalez M."/>
            <person name="Land M."/>
            <person name="Lao V."/>
            <person name="Larimer F."/>
            <person name="LiPuma J.J."/>
            <person name="Mahenthiralingam E."/>
            <person name="Malfatti S.A."/>
            <person name="Marx C.J."/>
            <person name="Parnell J.J."/>
            <person name="Ramette A."/>
            <person name="Richardson P."/>
            <person name="Seeger M."/>
            <person name="Smith D."/>
            <person name="Spilker T."/>
            <person name="Sul W.J."/>
            <person name="Tsoi T.V."/>
            <person name="Ulrich L.E."/>
            <person name="Zhulin I.B."/>
            <person name="Tiedje J.M."/>
        </authorList>
    </citation>
    <scope>NUCLEOTIDE SEQUENCE [LARGE SCALE GENOMIC DNA]</scope>
    <source>
        <strain>LB400</strain>
    </source>
</reference>
<comment type="function">
    <text evidence="1">Binds directly to 23S rRNA. The L1 stalk is quite mobile in the ribosome, and is involved in E site tRNA release.</text>
</comment>
<comment type="function">
    <text evidence="1">Protein L1 is also a translational repressor protein, it controls the translation of the L11 operon by binding to its mRNA.</text>
</comment>
<comment type="subunit">
    <text evidence="1">Part of the 50S ribosomal subunit.</text>
</comment>
<comment type="similarity">
    <text evidence="1">Belongs to the universal ribosomal protein uL1 family.</text>
</comment>
<proteinExistence type="inferred from homology"/>
<evidence type="ECO:0000255" key="1">
    <source>
        <dbReference type="HAMAP-Rule" id="MF_01318"/>
    </source>
</evidence>
<evidence type="ECO:0000305" key="2"/>
<organism>
    <name type="scientific">Paraburkholderia xenovorans (strain LB400)</name>
    <dbReference type="NCBI Taxonomy" id="266265"/>
    <lineage>
        <taxon>Bacteria</taxon>
        <taxon>Pseudomonadati</taxon>
        <taxon>Pseudomonadota</taxon>
        <taxon>Betaproteobacteria</taxon>
        <taxon>Burkholderiales</taxon>
        <taxon>Burkholderiaceae</taxon>
        <taxon>Paraburkholderia</taxon>
    </lineage>
</organism>
<accession>Q13TF9</accession>
<sequence length="232" mass="24221">MAKLSKRLQAFAAKVDRQKLYAIDEALSLVKECASAKFDESIDVAVQLGIDAKKSDQVVRGSVVLPAGTGKSVRVAVFAQGEKAEQARAAGAEVVGMEDLAEQVKAGKLDFDIVIASPDTMRVVGTLGQILGPRGLMPNPKVGTVTPDVATAVKNAKAGQVQFRVDKAGIIHATIGRASFEPTALRSNLNALVDALQKAKPATSKGVYLRKVALSSTMGVGVRVDQASLAAQ</sequence>
<name>RL1_PARXL</name>
<protein>
    <recommendedName>
        <fullName evidence="1">Large ribosomal subunit protein uL1</fullName>
    </recommendedName>
    <alternativeName>
        <fullName evidence="2">50S ribosomal protein L1</fullName>
    </alternativeName>
</protein>
<gene>
    <name evidence="1" type="primary">rplA</name>
    <name type="ordered locus">Bxeno_A4092</name>
    <name type="ORF">Bxe_A0303</name>
</gene>